<organism>
    <name type="scientific">Kluyveromyces lactis (strain ATCC 8585 / CBS 2359 / DSM 70799 / NBRC 1267 / NRRL Y-1140 / WM37)</name>
    <name type="common">Yeast</name>
    <name type="synonym">Candida sphaerica</name>
    <dbReference type="NCBI Taxonomy" id="284590"/>
    <lineage>
        <taxon>Eukaryota</taxon>
        <taxon>Fungi</taxon>
        <taxon>Dikarya</taxon>
        <taxon>Ascomycota</taxon>
        <taxon>Saccharomycotina</taxon>
        <taxon>Saccharomycetes</taxon>
        <taxon>Saccharomycetales</taxon>
        <taxon>Saccharomycetaceae</taxon>
        <taxon>Kluyveromyces</taxon>
    </lineage>
</organism>
<keyword id="KW-1015">Disulfide bond</keyword>
<keyword id="KW-0472">Membrane</keyword>
<keyword id="KW-0496">Mitochondrion</keyword>
<keyword id="KW-0999">Mitochondrion inner membrane</keyword>
<keyword id="KW-0653">Protein transport</keyword>
<keyword id="KW-1185">Reference proteome</keyword>
<keyword id="KW-0811">Translocation</keyword>
<keyword id="KW-0812">Transmembrane</keyword>
<keyword id="KW-1133">Transmembrane helix</keyword>
<keyword id="KW-0813">Transport</keyword>
<dbReference type="EMBL" id="CR382124">
    <property type="protein sequence ID" value="CAH00539.1"/>
    <property type="molecule type" value="Genomic_DNA"/>
</dbReference>
<dbReference type="RefSeq" id="XP_453443.1">
    <property type="nucleotide sequence ID" value="XM_453443.1"/>
</dbReference>
<dbReference type="SMR" id="Q6CRJ6"/>
<dbReference type="FunCoup" id="Q6CRJ6">
    <property type="interactions" value="694"/>
</dbReference>
<dbReference type="STRING" id="284590.Q6CRJ6"/>
<dbReference type="PaxDb" id="284590-Q6CRJ6"/>
<dbReference type="KEGG" id="kla:KLLA0_D08536g"/>
<dbReference type="eggNOG" id="KOG3225">
    <property type="taxonomic scope" value="Eukaryota"/>
</dbReference>
<dbReference type="HOGENOM" id="CLU_091077_1_0_1"/>
<dbReference type="InParanoid" id="Q6CRJ6"/>
<dbReference type="OMA" id="VNPNMAD"/>
<dbReference type="Proteomes" id="UP000000598">
    <property type="component" value="Chromosome D"/>
</dbReference>
<dbReference type="GO" id="GO:0042721">
    <property type="term" value="C:TIM22 mitochondrial import inner membrane insertion complex"/>
    <property type="evidence" value="ECO:0007669"/>
    <property type="project" value="InterPro"/>
</dbReference>
<dbReference type="GO" id="GO:0030943">
    <property type="term" value="F:mitochondrion targeting sequence binding"/>
    <property type="evidence" value="ECO:0007669"/>
    <property type="project" value="TreeGrafter"/>
</dbReference>
<dbReference type="GO" id="GO:0008320">
    <property type="term" value="F:protein transmembrane transporter activity"/>
    <property type="evidence" value="ECO:0007669"/>
    <property type="project" value="TreeGrafter"/>
</dbReference>
<dbReference type="GO" id="GO:0045039">
    <property type="term" value="P:protein insertion into mitochondrial inner membrane"/>
    <property type="evidence" value="ECO:0007669"/>
    <property type="project" value="InterPro"/>
</dbReference>
<dbReference type="InterPro" id="IPR039175">
    <property type="entry name" value="TIM22"/>
</dbReference>
<dbReference type="PANTHER" id="PTHR14110">
    <property type="entry name" value="MITOCHONDRIAL IMPORT INNER MEMBRANE TRANSLOCASE SUBUNIT TIM22"/>
    <property type="match status" value="1"/>
</dbReference>
<dbReference type="PANTHER" id="PTHR14110:SF0">
    <property type="entry name" value="MITOCHONDRIAL IMPORT INNER MEMBRANE TRANSLOCASE SUBUNIT TIM22"/>
    <property type="match status" value="1"/>
</dbReference>
<dbReference type="Pfam" id="PF02466">
    <property type="entry name" value="Tim17"/>
    <property type="match status" value="1"/>
</dbReference>
<protein>
    <recommendedName>
        <fullName>Mitochondrial import inner membrane translocase subunit TIM22</fullName>
    </recommendedName>
</protein>
<sequence>MVYRGFGLDQVSPPENKPFDQLSPEEQGEKGAQMMVEFMTSCPGKAAISGVTGFALGGVFGLFMASMAYDTPLHTPAPTNAPGLPNKVKELADLPLKQQIKIQFSDMGKRSYSSAKNFGYIGMIYSGVECVVESLRAKNDIYNGVAAGCLTGGGLAYKSGPQAALVGCAGFAAFSTAIDLYMRNENKKPPKDDFDE</sequence>
<evidence type="ECO:0000250" key="1">
    <source>
        <dbReference type="UniProtKB" id="A0A1D8PI78"/>
    </source>
</evidence>
<evidence type="ECO:0000250" key="2">
    <source>
        <dbReference type="UniProtKB" id="Q12328"/>
    </source>
</evidence>
<evidence type="ECO:0000255" key="3"/>
<evidence type="ECO:0000256" key="4">
    <source>
        <dbReference type="SAM" id="MobiDB-lite"/>
    </source>
</evidence>
<evidence type="ECO:0000305" key="5"/>
<feature type="chain" id="PRO_0000228091" description="Mitochondrial import inner membrane translocase subunit TIM22">
    <location>
        <begin position="1"/>
        <end position="196"/>
    </location>
</feature>
<feature type="transmembrane region" description="Helical" evidence="3">
    <location>
        <begin position="47"/>
        <end position="67"/>
    </location>
</feature>
<feature type="transmembrane region" description="Helical" evidence="3">
    <location>
        <begin position="141"/>
        <end position="157"/>
    </location>
</feature>
<feature type="transmembrane region" description="Helical" evidence="3">
    <location>
        <begin position="162"/>
        <end position="182"/>
    </location>
</feature>
<feature type="region of interest" description="Disordered" evidence="4">
    <location>
        <begin position="1"/>
        <end position="27"/>
    </location>
</feature>
<feature type="disulfide bond" evidence="1">
    <location>
        <begin position="42"/>
        <end position="130"/>
    </location>
</feature>
<feature type="disulfide bond" evidence="1">
    <location>
        <begin position="149"/>
        <end position="168"/>
    </location>
</feature>
<comment type="function">
    <text evidence="2">Essential core component of the TIM22 complex, a complex that mediates the import and insertion of multi-pass transmembrane proteins into the mitochondrial inner membrane. In the TIM22 complex, it constitutes the voltage-activated and signal-gated channel. Forms a twin-pore translocase that uses the membrane potential as external driving force in 2 voltage-dependent steps (By similarity).</text>
</comment>
<comment type="subunit">
    <text evidence="2">Component of the TIM22 complex, whose core is composed of TIM22 and TIM54, associated with the 70 kDa heterohexamer composed of TIM9 and TIM10 (or TIM8 and TIM13).</text>
</comment>
<comment type="subcellular location">
    <subcellularLocation>
        <location evidence="2">Mitochondrion inner membrane</location>
        <topology evidence="3">Multi-pass membrane protein</topology>
    </subcellularLocation>
</comment>
<comment type="similarity">
    <text evidence="5">Belongs to the Tim17/Tim22/Tim23 family.</text>
</comment>
<name>TIM22_KLULA</name>
<reference key="1">
    <citation type="journal article" date="2004" name="Nature">
        <title>Genome evolution in yeasts.</title>
        <authorList>
            <person name="Dujon B."/>
            <person name="Sherman D."/>
            <person name="Fischer G."/>
            <person name="Durrens P."/>
            <person name="Casaregola S."/>
            <person name="Lafontaine I."/>
            <person name="de Montigny J."/>
            <person name="Marck C."/>
            <person name="Neuveglise C."/>
            <person name="Talla E."/>
            <person name="Goffard N."/>
            <person name="Frangeul L."/>
            <person name="Aigle M."/>
            <person name="Anthouard V."/>
            <person name="Babour A."/>
            <person name="Barbe V."/>
            <person name="Barnay S."/>
            <person name="Blanchin S."/>
            <person name="Beckerich J.-M."/>
            <person name="Beyne E."/>
            <person name="Bleykasten C."/>
            <person name="Boisrame A."/>
            <person name="Boyer J."/>
            <person name="Cattolico L."/>
            <person name="Confanioleri F."/>
            <person name="de Daruvar A."/>
            <person name="Despons L."/>
            <person name="Fabre E."/>
            <person name="Fairhead C."/>
            <person name="Ferry-Dumazet H."/>
            <person name="Groppi A."/>
            <person name="Hantraye F."/>
            <person name="Hennequin C."/>
            <person name="Jauniaux N."/>
            <person name="Joyet P."/>
            <person name="Kachouri R."/>
            <person name="Kerrest A."/>
            <person name="Koszul R."/>
            <person name="Lemaire M."/>
            <person name="Lesur I."/>
            <person name="Ma L."/>
            <person name="Muller H."/>
            <person name="Nicaud J.-M."/>
            <person name="Nikolski M."/>
            <person name="Oztas S."/>
            <person name="Ozier-Kalogeropoulos O."/>
            <person name="Pellenz S."/>
            <person name="Potier S."/>
            <person name="Richard G.-F."/>
            <person name="Straub M.-L."/>
            <person name="Suleau A."/>
            <person name="Swennen D."/>
            <person name="Tekaia F."/>
            <person name="Wesolowski-Louvel M."/>
            <person name="Westhof E."/>
            <person name="Wirth B."/>
            <person name="Zeniou-Meyer M."/>
            <person name="Zivanovic Y."/>
            <person name="Bolotin-Fukuhara M."/>
            <person name="Thierry A."/>
            <person name="Bouchier C."/>
            <person name="Caudron B."/>
            <person name="Scarpelli C."/>
            <person name="Gaillardin C."/>
            <person name="Weissenbach J."/>
            <person name="Wincker P."/>
            <person name="Souciet J.-L."/>
        </authorList>
    </citation>
    <scope>NUCLEOTIDE SEQUENCE [LARGE SCALE GENOMIC DNA]</scope>
    <source>
        <strain>ATCC 8585 / CBS 2359 / DSM 70799 / NBRC 1267 / NRRL Y-1140 / WM37</strain>
    </source>
</reference>
<accession>Q6CRJ6</accession>
<gene>
    <name type="primary">TIM22</name>
    <name type="ordered locus">KLLA0D08536g</name>
</gene>
<proteinExistence type="inferred from homology"/>